<protein>
    <recommendedName>
        <fullName evidence="1">Acetate kinase</fullName>
        <ecNumber evidence="1">2.7.2.1</ecNumber>
    </recommendedName>
    <alternativeName>
        <fullName evidence="1">Acetokinase</fullName>
    </alternativeName>
</protein>
<gene>
    <name evidence="1" type="primary">ackA</name>
    <name type="synonym">ack</name>
    <name type="ordered locus">MCAP_0230</name>
</gene>
<accession>Q49113</accession>
<accession>Q2SSP6</accession>
<proteinExistence type="inferred from homology"/>
<name>ACKA_MYCCT</name>
<keyword id="KW-0067">ATP-binding</keyword>
<keyword id="KW-0963">Cytoplasm</keyword>
<keyword id="KW-0418">Kinase</keyword>
<keyword id="KW-0460">Magnesium</keyword>
<keyword id="KW-0479">Metal-binding</keyword>
<keyword id="KW-0547">Nucleotide-binding</keyword>
<keyword id="KW-0808">Transferase</keyword>
<sequence length="393" mass="44138">MILVINSGSSSIKFKLFDTSKAIEPILDGLAERIGIDGFLKFEHNNQKYKFEDPLPDHEHAIQLILNKLLELKIISNIDEIKGVGFRVVHGGEISHSSIINEEVLQKIQESVKLAPLHNPAAIIAIKAVKKLMPNTSMIACFDTAFHQTMPQVNYLYSVPYKWYEEFGVRKYGFHGISYEYIVNKCEEILNKKKEHLNLIVCHLGNGASISCIKDGKSYDTSMGLTPLAGLMMGTRSGDIDVSICEYVAKQTNSDIFAITQILNKQSGLLGLSQTSADMRDVLEQYDRNDKKAIIAVEKYVQVVADFIVKYANYLDSIDAVVFTAGIGENADVIRDLICKRVKLLGLQIDQEKNESKYSDYKLISSEKSKIPVYAIRTNEEKMICLDTLNLIK</sequence>
<evidence type="ECO:0000255" key="1">
    <source>
        <dbReference type="HAMAP-Rule" id="MF_00020"/>
    </source>
</evidence>
<reference key="1">
    <citation type="journal article" date="1996" name="Protein Sci.">
        <title>Sequence and organization of genes encoding enzymes involved in pyruvate metabolism in Mycoplasma capricolum.</title>
        <authorList>
            <person name="Zhu P.P."/>
            <person name="Peterkofsky A."/>
        </authorList>
    </citation>
    <scope>NUCLEOTIDE SEQUENCE [GENOMIC DNA]</scope>
</reference>
<reference key="2">
    <citation type="submission" date="2005-09" db="EMBL/GenBank/DDBJ databases">
        <authorList>
            <person name="Glass J.I."/>
            <person name="Lartigue C."/>
            <person name="Pfannkoch C."/>
            <person name="Baden-Tillson H."/>
            <person name="Smith H.O."/>
            <person name="Venter J.C."/>
            <person name="Roske K."/>
            <person name="Wise K.S."/>
            <person name="Calcutt M.J."/>
            <person name="Nelson W.C."/>
            <person name="Nierman W.C."/>
        </authorList>
    </citation>
    <scope>NUCLEOTIDE SEQUENCE [LARGE SCALE GENOMIC DNA]</scope>
    <source>
        <strain>California kid / ATCC 27343 / NCTC 10154</strain>
    </source>
</reference>
<feature type="chain" id="PRO_0000107584" description="Acetate kinase">
    <location>
        <begin position="1"/>
        <end position="393"/>
    </location>
</feature>
<feature type="active site" description="Proton donor/acceptor" evidence="1">
    <location>
        <position position="143"/>
    </location>
</feature>
<feature type="binding site" evidence="1">
    <location>
        <position position="6"/>
    </location>
    <ligand>
        <name>Mg(2+)</name>
        <dbReference type="ChEBI" id="CHEBI:18420"/>
    </ligand>
</feature>
<feature type="binding site" evidence="1">
    <location>
        <position position="13"/>
    </location>
    <ligand>
        <name>ATP</name>
        <dbReference type="ChEBI" id="CHEBI:30616"/>
    </ligand>
</feature>
<feature type="binding site" evidence="1">
    <location>
        <position position="87"/>
    </location>
    <ligand>
        <name>substrate</name>
    </ligand>
</feature>
<feature type="binding site" evidence="1">
    <location>
        <begin position="203"/>
        <end position="207"/>
    </location>
    <ligand>
        <name>ATP</name>
        <dbReference type="ChEBI" id="CHEBI:30616"/>
    </ligand>
</feature>
<feature type="binding site" evidence="1">
    <location>
        <begin position="278"/>
        <end position="280"/>
    </location>
    <ligand>
        <name>ATP</name>
        <dbReference type="ChEBI" id="CHEBI:30616"/>
    </ligand>
</feature>
<feature type="binding site" evidence="1">
    <location>
        <begin position="326"/>
        <end position="330"/>
    </location>
    <ligand>
        <name>ATP</name>
        <dbReference type="ChEBI" id="CHEBI:30616"/>
    </ligand>
</feature>
<feature type="binding site" evidence="1">
    <location>
        <position position="380"/>
    </location>
    <ligand>
        <name>Mg(2+)</name>
        <dbReference type="ChEBI" id="CHEBI:18420"/>
    </ligand>
</feature>
<feature type="site" description="Transition state stabilizer" evidence="1">
    <location>
        <position position="175"/>
    </location>
</feature>
<feature type="site" description="Transition state stabilizer" evidence="1">
    <location>
        <position position="236"/>
    </location>
</feature>
<dbReference type="EC" id="2.7.2.1" evidence="1"/>
<dbReference type="EMBL" id="U62057">
    <property type="protein sequence ID" value="AAC44347.1"/>
    <property type="molecule type" value="Genomic_DNA"/>
</dbReference>
<dbReference type="EMBL" id="CP000123">
    <property type="protein sequence ID" value="ABC01230.1"/>
    <property type="molecule type" value="Genomic_DNA"/>
</dbReference>
<dbReference type="RefSeq" id="WP_011387118.1">
    <property type="nucleotide sequence ID" value="NC_007633.1"/>
</dbReference>
<dbReference type="SMR" id="Q49113"/>
<dbReference type="GeneID" id="23778817"/>
<dbReference type="KEGG" id="mcp:MCAP_0230"/>
<dbReference type="HOGENOM" id="CLU_020352_0_1_14"/>
<dbReference type="PhylomeDB" id="Q49113"/>
<dbReference type="UniPathway" id="UPA00340">
    <property type="reaction ID" value="UER00458"/>
</dbReference>
<dbReference type="Proteomes" id="UP000001928">
    <property type="component" value="Chromosome"/>
</dbReference>
<dbReference type="GO" id="GO:0005737">
    <property type="term" value="C:cytoplasm"/>
    <property type="evidence" value="ECO:0007669"/>
    <property type="project" value="UniProtKB-SubCell"/>
</dbReference>
<dbReference type="GO" id="GO:0008776">
    <property type="term" value="F:acetate kinase activity"/>
    <property type="evidence" value="ECO:0007669"/>
    <property type="project" value="UniProtKB-UniRule"/>
</dbReference>
<dbReference type="GO" id="GO:0005524">
    <property type="term" value="F:ATP binding"/>
    <property type="evidence" value="ECO:0007669"/>
    <property type="project" value="UniProtKB-KW"/>
</dbReference>
<dbReference type="GO" id="GO:0000287">
    <property type="term" value="F:magnesium ion binding"/>
    <property type="evidence" value="ECO:0007669"/>
    <property type="project" value="UniProtKB-UniRule"/>
</dbReference>
<dbReference type="GO" id="GO:0006083">
    <property type="term" value="P:acetate metabolic process"/>
    <property type="evidence" value="ECO:0007669"/>
    <property type="project" value="TreeGrafter"/>
</dbReference>
<dbReference type="GO" id="GO:0006085">
    <property type="term" value="P:acetyl-CoA biosynthetic process"/>
    <property type="evidence" value="ECO:0007669"/>
    <property type="project" value="UniProtKB-UniRule"/>
</dbReference>
<dbReference type="CDD" id="cd24010">
    <property type="entry name" value="ASKHA_NBD_AcK_PK"/>
    <property type="match status" value="1"/>
</dbReference>
<dbReference type="Gene3D" id="3.30.420.40">
    <property type="match status" value="2"/>
</dbReference>
<dbReference type="HAMAP" id="MF_00020">
    <property type="entry name" value="Acetate_kinase"/>
    <property type="match status" value="1"/>
</dbReference>
<dbReference type="InterPro" id="IPR004372">
    <property type="entry name" value="Ac/propionate_kinase"/>
</dbReference>
<dbReference type="InterPro" id="IPR000890">
    <property type="entry name" value="Aliphatic_acid_kin_short-chain"/>
</dbReference>
<dbReference type="InterPro" id="IPR023865">
    <property type="entry name" value="Aliphatic_acid_kinase_CS"/>
</dbReference>
<dbReference type="InterPro" id="IPR043129">
    <property type="entry name" value="ATPase_NBD"/>
</dbReference>
<dbReference type="NCBIfam" id="TIGR00016">
    <property type="entry name" value="ackA"/>
    <property type="match status" value="1"/>
</dbReference>
<dbReference type="PANTHER" id="PTHR21060">
    <property type="entry name" value="ACETATE KINASE"/>
    <property type="match status" value="1"/>
</dbReference>
<dbReference type="PANTHER" id="PTHR21060:SF15">
    <property type="entry name" value="ACETATE KINASE-RELATED"/>
    <property type="match status" value="1"/>
</dbReference>
<dbReference type="Pfam" id="PF00871">
    <property type="entry name" value="Acetate_kinase"/>
    <property type="match status" value="1"/>
</dbReference>
<dbReference type="PIRSF" id="PIRSF000722">
    <property type="entry name" value="Acetate_prop_kin"/>
    <property type="match status" value="1"/>
</dbReference>
<dbReference type="PRINTS" id="PR00471">
    <property type="entry name" value="ACETATEKNASE"/>
</dbReference>
<dbReference type="SUPFAM" id="SSF53067">
    <property type="entry name" value="Actin-like ATPase domain"/>
    <property type="match status" value="2"/>
</dbReference>
<dbReference type="PROSITE" id="PS01075">
    <property type="entry name" value="ACETATE_KINASE_1"/>
    <property type="match status" value="1"/>
</dbReference>
<dbReference type="PROSITE" id="PS01076">
    <property type="entry name" value="ACETATE_KINASE_2"/>
    <property type="match status" value="1"/>
</dbReference>
<comment type="function">
    <text evidence="1">Catalyzes the formation of acetyl phosphate from acetate and ATP. Can also catalyze the reverse reaction.</text>
</comment>
<comment type="catalytic activity">
    <reaction evidence="1">
        <text>acetate + ATP = acetyl phosphate + ADP</text>
        <dbReference type="Rhea" id="RHEA:11352"/>
        <dbReference type="ChEBI" id="CHEBI:22191"/>
        <dbReference type="ChEBI" id="CHEBI:30089"/>
        <dbReference type="ChEBI" id="CHEBI:30616"/>
        <dbReference type="ChEBI" id="CHEBI:456216"/>
        <dbReference type="EC" id="2.7.2.1"/>
    </reaction>
</comment>
<comment type="cofactor">
    <cofactor evidence="1">
        <name>Mg(2+)</name>
        <dbReference type="ChEBI" id="CHEBI:18420"/>
    </cofactor>
    <cofactor evidence="1">
        <name>Mn(2+)</name>
        <dbReference type="ChEBI" id="CHEBI:29035"/>
    </cofactor>
    <text evidence="1">Mg(2+). Can also accept Mn(2+).</text>
</comment>
<comment type="pathway">
    <text evidence="1">Metabolic intermediate biosynthesis; acetyl-CoA biosynthesis; acetyl-CoA from acetate: step 1/2.</text>
</comment>
<comment type="subunit">
    <text evidence="1">Homodimer.</text>
</comment>
<comment type="subcellular location">
    <subcellularLocation>
        <location evidence="1">Cytoplasm</location>
    </subcellularLocation>
</comment>
<comment type="similarity">
    <text evidence="1">Belongs to the acetokinase family.</text>
</comment>
<organism>
    <name type="scientific">Mycoplasma capricolum subsp. capricolum (strain California kid / ATCC 27343 / NCTC 10154)</name>
    <dbReference type="NCBI Taxonomy" id="340047"/>
    <lineage>
        <taxon>Bacteria</taxon>
        <taxon>Bacillati</taxon>
        <taxon>Mycoplasmatota</taxon>
        <taxon>Mollicutes</taxon>
        <taxon>Mycoplasmataceae</taxon>
        <taxon>Mycoplasma</taxon>
    </lineage>
</organism>